<protein>
    <recommendedName>
        <fullName>GTP-binding nuclear protein Ran, testis-specific isoform</fullName>
        <ecNumber evidence="2">3.6.5.-</ecNumber>
    </recommendedName>
</protein>
<sequence length="216" mass="24451">MAGQGKPQIQFKLVLVGDGGTGKTTFMKRHLTGEFEKEYVATLGVEVHTLVFHTNRGPIKFNVWDTAGQEKFGGLRDGYYIQAQCAIIMFDVTSRVTYKNVPSWHKDLVRVCENIPIVLCGNKVDIKDMKVKAKPILFHRKKNLQYYDISAKSNYNFEKPFFWLARKLIGDPNLEFVAMPALAPPEVVMDPALAAQYEHDLEVAQTTALPDEEDDL</sequence>
<gene>
    <name type="primary">Rasl2-9</name>
</gene>
<organism>
    <name type="scientific">Rattus norvegicus</name>
    <name type="common">Rat</name>
    <dbReference type="NCBI Taxonomy" id="10116"/>
    <lineage>
        <taxon>Eukaryota</taxon>
        <taxon>Metazoa</taxon>
        <taxon>Chordata</taxon>
        <taxon>Craniata</taxon>
        <taxon>Vertebrata</taxon>
        <taxon>Euteleostomi</taxon>
        <taxon>Mammalia</taxon>
        <taxon>Eutheria</taxon>
        <taxon>Euarchontoglires</taxon>
        <taxon>Glires</taxon>
        <taxon>Rodentia</taxon>
        <taxon>Myomorpha</taxon>
        <taxon>Muroidea</taxon>
        <taxon>Muridae</taxon>
        <taxon>Murinae</taxon>
        <taxon>Rattus</taxon>
    </lineage>
</organism>
<keyword id="KW-0007">Acetylation</keyword>
<keyword id="KW-0342">GTP-binding</keyword>
<keyword id="KW-0378">Hydrolase</keyword>
<keyword id="KW-1017">Isopeptide bond</keyword>
<keyword id="KW-0547">Nucleotide-binding</keyword>
<keyword id="KW-0539">Nucleus</keyword>
<keyword id="KW-0597">Phosphoprotein</keyword>
<keyword id="KW-0653">Protein transport</keyword>
<keyword id="KW-1185">Reference proteome</keyword>
<keyword id="KW-0813">Transport</keyword>
<keyword id="KW-0832">Ubl conjugation</keyword>
<feature type="initiator methionine" description="Removed" evidence="2">
    <location>
        <position position="1"/>
    </location>
</feature>
<feature type="chain" id="PRO_0000208700" description="GTP-binding nuclear protein Ran, testis-specific isoform">
    <location>
        <begin position="2"/>
        <end position="216"/>
    </location>
</feature>
<feature type="domain" description="Small GTPase Ran-type" evidence="4">
    <location>
        <begin position="7"/>
        <end position="171"/>
    </location>
</feature>
<feature type="region of interest" description="Switch-I" evidence="4">
    <location>
        <begin position="37"/>
        <end position="45"/>
    </location>
</feature>
<feature type="region of interest" description="Switch-II" evidence="4">
    <location>
        <begin position="68"/>
        <end position="84"/>
    </location>
</feature>
<feature type="binding site" evidence="1">
    <location>
        <begin position="17"/>
        <end position="24"/>
    </location>
    <ligand>
        <name>GTP</name>
        <dbReference type="ChEBI" id="CHEBI:37565"/>
    </ligand>
</feature>
<feature type="binding site" evidence="1">
    <location>
        <begin position="65"/>
        <end position="69"/>
    </location>
    <ligand>
        <name>GTP</name>
        <dbReference type="ChEBI" id="CHEBI:37565"/>
    </ligand>
</feature>
<feature type="binding site" evidence="1">
    <location>
        <begin position="122"/>
        <end position="125"/>
    </location>
    <ligand>
        <name>GTP</name>
        <dbReference type="ChEBI" id="CHEBI:37565"/>
    </ligand>
</feature>
<feature type="modified residue" description="N-acetylalanine" evidence="2">
    <location>
        <position position="2"/>
    </location>
</feature>
<feature type="modified residue" description="Phosphothreonine" evidence="2">
    <location>
        <position position="24"/>
    </location>
</feature>
<feature type="modified residue" description="N6-acetyllysine" evidence="2">
    <location>
        <position position="60"/>
    </location>
</feature>
<feature type="modified residue" description="N6-acetyllysine; alternate" evidence="2">
    <location>
        <position position="71"/>
    </location>
</feature>
<feature type="modified residue" description="N6-acetyllysine" evidence="2">
    <location>
        <position position="99"/>
    </location>
</feature>
<feature type="modified residue" description="N6-acetyllysine" evidence="2">
    <location>
        <position position="134"/>
    </location>
</feature>
<feature type="modified residue" description="N6-acetyllysine; alternate" evidence="2">
    <location>
        <position position="159"/>
    </location>
</feature>
<feature type="modified residue" description="N6-succinyllysine; alternate" evidence="3">
    <location>
        <position position="159"/>
    </location>
</feature>
<feature type="cross-link" description="Glycyl lysine isopeptide (Lys-Gly) (interchain with G-Cter in SUMO2); alternate" evidence="2">
    <location>
        <position position="71"/>
    </location>
</feature>
<feature type="cross-link" description="Glycyl lysine isopeptide (Lys-Gly) (interchain with G-Cter in ubiquitin); alternate" evidence="2">
    <location>
        <position position="71"/>
    </location>
</feature>
<feature type="cross-link" description="Glycyl lysine isopeptide (Lys-Gly) (interchain with G-Cter in SUMO2)" evidence="2">
    <location>
        <position position="152"/>
    </location>
</feature>
<name>RANT_RAT</name>
<accession>Q8K586</accession>
<comment type="function">
    <text evidence="2">GTP-binding protein involved in nucleocytoplasmic transport. Required for the import of protein into the nucleus and also for RNA export. Involved in chromatin condensation and control of cell cycle (By similarity).</text>
</comment>
<comment type="catalytic activity">
    <reaction evidence="2">
        <text>GTP + H2O = GDP + phosphate + H(+)</text>
        <dbReference type="Rhea" id="RHEA:19669"/>
        <dbReference type="ChEBI" id="CHEBI:15377"/>
        <dbReference type="ChEBI" id="CHEBI:15378"/>
        <dbReference type="ChEBI" id="CHEBI:37565"/>
        <dbReference type="ChEBI" id="CHEBI:43474"/>
        <dbReference type="ChEBI" id="CHEBI:58189"/>
    </reaction>
    <physiologicalReaction direction="left-to-right" evidence="2">
        <dbReference type="Rhea" id="RHEA:19670"/>
    </physiologicalReaction>
</comment>
<comment type="subcellular location">
    <subcellularLocation>
        <location evidence="5">Nucleus</location>
    </subcellularLocation>
</comment>
<comment type="tissue specificity">
    <text evidence="5">Testis specific.</text>
</comment>
<comment type="similarity">
    <text evidence="4 6">Belongs to the small GTPase superfamily. Ran family.</text>
</comment>
<proteinExistence type="evidence at transcript level"/>
<evidence type="ECO:0000250" key="1"/>
<evidence type="ECO:0000250" key="2">
    <source>
        <dbReference type="UniProtKB" id="P62826"/>
    </source>
</evidence>
<evidence type="ECO:0000250" key="3">
    <source>
        <dbReference type="UniProtKB" id="P62827"/>
    </source>
</evidence>
<evidence type="ECO:0000255" key="4">
    <source>
        <dbReference type="PROSITE-ProRule" id="PRU00752"/>
    </source>
</evidence>
<evidence type="ECO:0000269" key="5">
    <source>
    </source>
</evidence>
<evidence type="ECO:0000305" key="6"/>
<dbReference type="EC" id="3.6.5.-" evidence="2"/>
<dbReference type="EMBL" id="AF507943">
    <property type="protein sequence ID" value="AAM33416.1"/>
    <property type="molecule type" value="mRNA"/>
</dbReference>
<dbReference type="RefSeq" id="NP_001160147.1">
    <property type="nucleotide sequence ID" value="NM_001166675.1"/>
</dbReference>
<dbReference type="SMR" id="Q8K586"/>
<dbReference type="BioGRID" id="623649">
    <property type="interactions" value="3"/>
</dbReference>
<dbReference type="FunCoup" id="Q8K586">
    <property type="interactions" value="1884"/>
</dbReference>
<dbReference type="IntAct" id="Q8K586">
    <property type="interactions" value="2"/>
</dbReference>
<dbReference type="STRING" id="10116.ENSRNOP00000039019"/>
<dbReference type="iPTMnet" id="Q8K586"/>
<dbReference type="PhosphoSitePlus" id="Q8K586"/>
<dbReference type="jPOST" id="Q8K586"/>
<dbReference type="PaxDb" id="10116-ENSRNOP00000039019"/>
<dbReference type="Ensembl" id="ENSRNOT00000050233.5">
    <property type="protein sequence ID" value="ENSRNOP00000039019.2"/>
    <property type="gene ID" value="ENSRNOG00000032913.5"/>
</dbReference>
<dbReference type="GeneID" id="751812"/>
<dbReference type="KEGG" id="rno:751812"/>
<dbReference type="UCSC" id="RGD:2314256">
    <property type="organism name" value="rat"/>
</dbReference>
<dbReference type="AGR" id="RGD:2314256"/>
<dbReference type="CTD" id="19428"/>
<dbReference type="RGD" id="2314256">
    <property type="gene designation" value="Rasl2-9"/>
</dbReference>
<dbReference type="eggNOG" id="KOG0096">
    <property type="taxonomic scope" value="Eukaryota"/>
</dbReference>
<dbReference type="GeneTree" id="ENSGT00940000153786"/>
<dbReference type="HOGENOM" id="CLU_041217_13_0_1"/>
<dbReference type="InParanoid" id="Q8K586"/>
<dbReference type="OMA" id="FFWLARK"/>
<dbReference type="OrthoDB" id="48625at2759"/>
<dbReference type="PhylomeDB" id="Q8K586"/>
<dbReference type="TreeFam" id="TF106302"/>
<dbReference type="PRO" id="PR:Q8K586"/>
<dbReference type="Proteomes" id="UP000002494">
    <property type="component" value="Chromosome 1"/>
</dbReference>
<dbReference type="Bgee" id="ENSRNOG00000032913">
    <property type="expression patterns" value="Expressed in testis and 2 other cell types or tissues"/>
</dbReference>
<dbReference type="GO" id="GO:0005737">
    <property type="term" value="C:cytoplasm"/>
    <property type="evidence" value="ECO:0000318"/>
    <property type="project" value="GO_Central"/>
</dbReference>
<dbReference type="GO" id="GO:0005634">
    <property type="term" value="C:nucleus"/>
    <property type="evidence" value="ECO:0000318"/>
    <property type="project" value="GO_Central"/>
</dbReference>
<dbReference type="GO" id="GO:0005525">
    <property type="term" value="F:GTP binding"/>
    <property type="evidence" value="ECO:0007669"/>
    <property type="project" value="UniProtKB-KW"/>
</dbReference>
<dbReference type="GO" id="GO:0003924">
    <property type="term" value="F:GTPase activity"/>
    <property type="evidence" value="ECO:0000318"/>
    <property type="project" value="GO_Central"/>
</dbReference>
<dbReference type="GO" id="GO:0006606">
    <property type="term" value="P:protein import into nucleus"/>
    <property type="evidence" value="ECO:0000318"/>
    <property type="project" value="GO_Central"/>
</dbReference>
<dbReference type="GO" id="GO:0000054">
    <property type="term" value="P:ribosomal subunit export from nucleus"/>
    <property type="evidence" value="ECO:0000318"/>
    <property type="project" value="GO_Central"/>
</dbReference>
<dbReference type="CDD" id="cd00877">
    <property type="entry name" value="Ran"/>
    <property type="match status" value="1"/>
</dbReference>
<dbReference type="FunFam" id="3.40.50.300:FF:000131">
    <property type="entry name" value="GTP-binding nuclear protein Ran"/>
    <property type="match status" value="1"/>
</dbReference>
<dbReference type="Gene3D" id="3.40.50.300">
    <property type="entry name" value="P-loop containing nucleotide triphosphate hydrolases"/>
    <property type="match status" value="1"/>
</dbReference>
<dbReference type="InterPro" id="IPR027417">
    <property type="entry name" value="P-loop_NTPase"/>
</dbReference>
<dbReference type="InterPro" id="IPR002041">
    <property type="entry name" value="Ran_GTPase"/>
</dbReference>
<dbReference type="InterPro" id="IPR005225">
    <property type="entry name" value="Small_GTP-bd"/>
</dbReference>
<dbReference type="InterPro" id="IPR001806">
    <property type="entry name" value="Small_GTPase"/>
</dbReference>
<dbReference type="NCBIfam" id="TIGR00231">
    <property type="entry name" value="small_GTP"/>
    <property type="match status" value="1"/>
</dbReference>
<dbReference type="PANTHER" id="PTHR24071:SF2">
    <property type="entry name" value="GTP-BINDING NUCLEAR PROTEIN RAN, TESTIS-SPECIFIC ISOFORM"/>
    <property type="match status" value="1"/>
</dbReference>
<dbReference type="PANTHER" id="PTHR24071">
    <property type="entry name" value="RAN GTPASE"/>
    <property type="match status" value="1"/>
</dbReference>
<dbReference type="Pfam" id="PF00071">
    <property type="entry name" value="Ras"/>
    <property type="match status" value="1"/>
</dbReference>
<dbReference type="PRINTS" id="PR00627">
    <property type="entry name" value="GTPRANTC4"/>
</dbReference>
<dbReference type="SMART" id="SM00175">
    <property type="entry name" value="RAB"/>
    <property type="match status" value="1"/>
</dbReference>
<dbReference type="SMART" id="SM00176">
    <property type="entry name" value="RAN"/>
    <property type="match status" value="1"/>
</dbReference>
<dbReference type="SMART" id="SM00173">
    <property type="entry name" value="RAS"/>
    <property type="match status" value="1"/>
</dbReference>
<dbReference type="SMART" id="SM00174">
    <property type="entry name" value="RHO"/>
    <property type="match status" value="1"/>
</dbReference>
<dbReference type="SUPFAM" id="SSF52540">
    <property type="entry name" value="P-loop containing nucleoside triphosphate hydrolases"/>
    <property type="match status" value="1"/>
</dbReference>
<dbReference type="PROSITE" id="PS51418">
    <property type="entry name" value="RAN"/>
    <property type="match status" value="1"/>
</dbReference>
<reference key="1">
    <citation type="journal article" date="2002" name="Mol. Reprod. Dev.">
        <title>Ran, a GTP-binding protein involved in nucleocytoplasmic transport and microtubule nucleation, relocates from the manchette to the centrosome region during rat spermiogenesis.</title>
        <authorList>
            <person name="Kierszenbaum A.L."/>
            <person name="Gil M."/>
            <person name="Rivkin E."/>
            <person name="Tres L.L."/>
        </authorList>
    </citation>
    <scope>NUCLEOTIDE SEQUENCE [MRNA]</scope>
    <scope>SUBCELLULAR LOCATION</scope>
    <scope>TISSUE SPECIFICITY</scope>
    <source>
        <strain>Sprague-Dawley</strain>
    </source>
</reference>